<evidence type="ECO:0000255" key="1">
    <source>
        <dbReference type="HAMAP-Rule" id="MF_00126"/>
    </source>
</evidence>
<name>SYQ_ECOLC</name>
<organism>
    <name type="scientific">Escherichia coli (strain ATCC 8739 / DSM 1576 / NBRC 3972 / NCIMB 8545 / WDCM 00012 / Crooks)</name>
    <dbReference type="NCBI Taxonomy" id="481805"/>
    <lineage>
        <taxon>Bacteria</taxon>
        <taxon>Pseudomonadati</taxon>
        <taxon>Pseudomonadota</taxon>
        <taxon>Gammaproteobacteria</taxon>
        <taxon>Enterobacterales</taxon>
        <taxon>Enterobacteriaceae</taxon>
        <taxon>Escherichia</taxon>
    </lineage>
</organism>
<feature type="chain" id="PRO_1000076254" description="Glutamine--tRNA ligase">
    <location>
        <begin position="1"/>
        <end position="554"/>
    </location>
</feature>
<feature type="region of interest" description="Interaction with tRNA" evidence="1">
    <location>
        <begin position="317"/>
        <end position="324"/>
    </location>
</feature>
<feature type="short sequence motif" description="'HIGH' region" evidence="1">
    <location>
        <begin position="34"/>
        <end position="44"/>
    </location>
</feature>
<feature type="short sequence motif" description="'KMSKS' region" evidence="1">
    <location>
        <begin position="268"/>
        <end position="272"/>
    </location>
</feature>
<feature type="binding site" evidence="1">
    <location>
        <begin position="35"/>
        <end position="37"/>
    </location>
    <ligand>
        <name>ATP</name>
        <dbReference type="ChEBI" id="CHEBI:30616"/>
    </ligand>
</feature>
<feature type="binding site" evidence="1">
    <location>
        <begin position="41"/>
        <end position="47"/>
    </location>
    <ligand>
        <name>ATP</name>
        <dbReference type="ChEBI" id="CHEBI:30616"/>
    </ligand>
</feature>
<feature type="binding site" evidence="1">
    <location>
        <position position="67"/>
    </location>
    <ligand>
        <name>L-glutamine</name>
        <dbReference type="ChEBI" id="CHEBI:58359"/>
    </ligand>
</feature>
<feature type="binding site" evidence="1">
    <location>
        <position position="212"/>
    </location>
    <ligand>
        <name>L-glutamine</name>
        <dbReference type="ChEBI" id="CHEBI:58359"/>
    </ligand>
</feature>
<feature type="binding site" evidence="1">
    <location>
        <position position="231"/>
    </location>
    <ligand>
        <name>ATP</name>
        <dbReference type="ChEBI" id="CHEBI:30616"/>
    </ligand>
</feature>
<feature type="binding site" evidence="1">
    <location>
        <begin position="261"/>
        <end position="262"/>
    </location>
    <ligand>
        <name>ATP</name>
        <dbReference type="ChEBI" id="CHEBI:30616"/>
    </ligand>
</feature>
<feature type="binding site" evidence="1">
    <location>
        <begin position="269"/>
        <end position="271"/>
    </location>
    <ligand>
        <name>ATP</name>
        <dbReference type="ChEBI" id="CHEBI:30616"/>
    </ligand>
</feature>
<accession>B1IY48</accession>
<sequence>MSEAEARPTNFIRQIIDEDLASGKHTTVHTRFPPEPNGYLHIGHAKSICLNFGIAQDYKGQCNLRFDDTNPVKEDIEYVESIKNDVEWLGFHWSGNVRYSSDYFDQLHAYAIELINKGLAYVDELTPEQIREYRGTLTQPGKNSPYRDRSVEENLALFEKMRAGGFEEGKACLRAKIDMASPFIVMRDPVLYRIKFAEHHQTGNKWCIYPMYDFTHCISDALEGITHSLCTLEFQDNRRLYDWVLDNITIPVHPRQYEFSRLNLEYTVMSKRKLNLLVTDKHVEGWDDPRMPTISGLRRRGYTAASIREFCKRIGVTKQDNTIEMASLESCIREDLNENAPRAMAVIDPVKLVIENYQGEGEMVTMPNHPNKPEMGSRQVPFSGEIWIDRADFREEANKQYKRLVLGKEVRLRNAYVIKAERVEKDAEGNITTIFCTYDADTLSKDPADGRKVKGVIHWVSAAHALPVEIRLYDRLFSVPNPGAADDFLSVINPESLVIKQGFAEPSLKDAVAGKAFQFEREGYFCLDSRHSTAEKPVFNRTVGLRDTWAKVGE</sequence>
<reference key="1">
    <citation type="submission" date="2008-02" db="EMBL/GenBank/DDBJ databases">
        <title>Complete sequence of Escherichia coli C str. ATCC 8739.</title>
        <authorList>
            <person name="Copeland A."/>
            <person name="Lucas S."/>
            <person name="Lapidus A."/>
            <person name="Glavina del Rio T."/>
            <person name="Dalin E."/>
            <person name="Tice H."/>
            <person name="Bruce D."/>
            <person name="Goodwin L."/>
            <person name="Pitluck S."/>
            <person name="Kiss H."/>
            <person name="Brettin T."/>
            <person name="Detter J.C."/>
            <person name="Han C."/>
            <person name="Kuske C.R."/>
            <person name="Schmutz J."/>
            <person name="Larimer F."/>
            <person name="Land M."/>
            <person name="Hauser L."/>
            <person name="Kyrpides N."/>
            <person name="Mikhailova N."/>
            <person name="Ingram L."/>
            <person name="Richardson P."/>
        </authorList>
    </citation>
    <scope>NUCLEOTIDE SEQUENCE [LARGE SCALE GENOMIC DNA]</scope>
    <source>
        <strain>ATCC 8739 / DSM 1576 / NBRC 3972 / NCIMB 8545 / WDCM 00012 / Crooks</strain>
    </source>
</reference>
<comment type="catalytic activity">
    <reaction evidence="1">
        <text>tRNA(Gln) + L-glutamine + ATP = L-glutaminyl-tRNA(Gln) + AMP + diphosphate</text>
        <dbReference type="Rhea" id="RHEA:20121"/>
        <dbReference type="Rhea" id="RHEA-COMP:9662"/>
        <dbReference type="Rhea" id="RHEA-COMP:9681"/>
        <dbReference type="ChEBI" id="CHEBI:30616"/>
        <dbReference type="ChEBI" id="CHEBI:33019"/>
        <dbReference type="ChEBI" id="CHEBI:58359"/>
        <dbReference type="ChEBI" id="CHEBI:78442"/>
        <dbReference type="ChEBI" id="CHEBI:78521"/>
        <dbReference type="ChEBI" id="CHEBI:456215"/>
        <dbReference type="EC" id="6.1.1.18"/>
    </reaction>
</comment>
<comment type="subunit">
    <text evidence="1">Monomer.</text>
</comment>
<comment type="subcellular location">
    <subcellularLocation>
        <location evidence="1">Cytoplasm</location>
    </subcellularLocation>
</comment>
<comment type="similarity">
    <text evidence="1">Belongs to the class-I aminoacyl-tRNA synthetase family.</text>
</comment>
<protein>
    <recommendedName>
        <fullName evidence="1">Glutamine--tRNA ligase</fullName>
        <ecNumber evidence="1">6.1.1.18</ecNumber>
    </recommendedName>
    <alternativeName>
        <fullName evidence="1">Glutaminyl-tRNA synthetase</fullName>
        <shortName evidence="1">GlnRS</shortName>
    </alternativeName>
</protein>
<keyword id="KW-0030">Aminoacyl-tRNA synthetase</keyword>
<keyword id="KW-0067">ATP-binding</keyword>
<keyword id="KW-0963">Cytoplasm</keyword>
<keyword id="KW-0436">Ligase</keyword>
<keyword id="KW-0547">Nucleotide-binding</keyword>
<keyword id="KW-0648">Protein biosynthesis</keyword>
<gene>
    <name evidence="1" type="primary">glnS</name>
    <name type="ordered locus">EcolC_2976</name>
</gene>
<dbReference type="EC" id="6.1.1.18" evidence="1"/>
<dbReference type="EMBL" id="CP000946">
    <property type="protein sequence ID" value="ACA78601.1"/>
    <property type="molecule type" value="Genomic_DNA"/>
</dbReference>
<dbReference type="RefSeq" id="WP_001287154.1">
    <property type="nucleotide sequence ID" value="NZ_MTFT01000005.1"/>
</dbReference>
<dbReference type="SMR" id="B1IY48"/>
<dbReference type="GeneID" id="93776805"/>
<dbReference type="KEGG" id="ecl:EcolC_2976"/>
<dbReference type="HOGENOM" id="CLU_001882_2_3_6"/>
<dbReference type="GO" id="GO:0005829">
    <property type="term" value="C:cytosol"/>
    <property type="evidence" value="ECO:0007669"/>
    <property type="project" value="TreeGrafter"/>
</dbReference>
<dbReference type="GO" id="GO:0005524">
    <property type="term" value="F:ATP binding"/>
    <property type="evidence" value="ECO:0007669"/>
    <property type="project" value="UniProtKB-UniRule"/>
</dbReference>
<dbReference type="GO" id="GO:0004819">
    <property type="term" value="F:glutamine-tRNA ligase activity"/>
    <property type="evidence" value="ECO:0007669"/>
    <property type="project" value="UniProtKB-UniRule"/>
</dbReference>
<dbReference type="GO" id="GO:0006425">
    <property type="term" value="P:glutaminyl-tRNA aminoacylation"/>
    <property type="evidence" value="ECO:0007669"/>
    <property type="project" value="InterPro"/>
</dbReference>
<dbReference type="GO" id="GO:0006424">
    <property type="term" value="P:glutamyl-tRNA aminoacylation"/>
    <property type="evidence" value="ECO:0007669"/>
    <property type="project" value="UniProtKB-UniRule"/>
</dbReference>
<dbReference type="CDD" id="cd00807">
    <property type="entry name" value="GlnRS_core"/>
    <property type="match status" value="1"/>
</dbReference>
<dbReference type="FunFam" id="1.10.1160.10:FF:000001">
    <property type="entry name" value="Glutamine--tRNA ligase"/>
    <property type="match status" value="1"/>
</dbReference>
<dbReference type="FunFam" id="2.40.240.10:FF:000001">
    <property type="entry name" value="Glutamine--tRNA ligase"/>
    <property type="match status" value="1"/>
</dbReference>
<dbReference type="FunFam" id="2.40.240.10:FF:000003">
    <property type="entry name" value="Glutamine--tRNA ligase"/>
    <property type="match status" value="1"/>
</dbReference>
<dbReference type="FunFam" id="3.90.800.10:FF:000001">
    <property type="entry name" value="Glutamine--tRNA ligase"/>
    <property type="match status" value="1"/>
</dbReference>
<dbReference type="FunFam" id="3.40.50.620:FF:000037">
    <property type="entry name" value="Glutamine--tRNA ligase cytoplasmic"/>
    <property type="match status" value="1"/>
</dbReference>
<dbReference type="Gene3D" id="1.10.1160.10">
    <property type="entry name" value="Glutamyl-trna Synthetase, Domain 2"/>
    <property type="match status" value="1"/>
</dbReference>
<dbReference type="Gene3D" id="3.90.800.10">
    <property type="entry name" value="Glutamyl-tRNA Synthetase, Domain 3"/>
    <property type="match status" value="1"/>
</dbReference>
<dbReference type="Gene3D" id="3.40.50.620">
    <property type="entry name" value="HUPs"/>
    <property type="match status" value="1"/>
</dbReference>
<dbReference type="Gene3D" id="2.40.240.10">
    <property type="entry name" value="Ribosomal Protein L25, Chain P"/>
    <property type="match status" value="2"/>
</dbReference>
<dbReference type="HAMAP" id="MF_00126">
    <property type="entry name" value="Gln_tRNA_synth"/>
    <property type="match status" value="1"/>
</dbReference>
<dbReference type="InterPro" id="IPR001412">
    <property type="entry name" value="aa-tRNA-synth_I_CS"/>
</dbReference>
<dbReference type="InterPro" id="IPR004514">
    <property type="entry name" value="Gln-tRNA-synth"/>
</dbReference>
<dbReference type="InterPro" id="IPR050132">
    <property type="entry name" value="Gln/Glu-tRNA_Ligase"/>
</dbReference>
<dbReference type="InterPro" id="IPR022861">
    <property type="entry name" value="Gln_tRNA_ligase_bac"/>
</dbReference>
<dbReference type="InterPro" id="IPR000924">
    <property type="entry name" value="Glu/Gln-tRNA-synth"/>
</dbReference>
<dbReference type="InterPro" id="IPR020058">
    <property type="entry name" value="Glu/Gln-tRNA-synth_Ib_cat-dom"/>
</dbReference>
<dbReference type="InterPro" id="IPR020059">
    <property type="entry name" value="Glu/Gln-tRNA-synth_Ib_codon-bd"/>
</dbReference>
<dbReference type="InterPro" id="IPR020061">
    <property type="entry name" value="Glu_tRNA_lig_a-bdl"/>
</dbReference>
<dbReference type="InterPro" id="IPR020056">
    <property type="entry name" value="Rbsml_bL25/Gln-tRNA_synth_N"/>
</dbReference>
<dbReference type="InterPro" id="IPR011035">
    <property type="entry name" value="Ribosomal_bL25/Gln-tRNA_synth"/>
</dbReference>
<dbReference type="InterPro" id="IPR014729">
    <property type="entry name" value="Rossmann-like_a/b/a_fold"/>
</dbReference>
<dbReference type="InterPro" id="IPR049437">
    <property type="entry name" value="tRNA-synt_1c_C2"/>
</dbReference>
<dbReference type="NCBIfam" id="TIGR00440">
    <property type="entry name" value="glnS"/>
    <property type="match status" value="1"/>
</dbReference>
<dbReference type="NCBIfam" id="NF011291">
    <property type="entry name" value="PRK14703.1"/>
    <property type="match status" value="1"/>
</dbReference>
<dbReference type="PANTHER" id="PTHR43097:SF5">
    <property type="entry name" value="GLUTAMATE--TRNA LIGASE"/>
    <property type="match status" value="1"/>
</dbReference>
<dbReference type="PANTHER" id="PTHR43097">
    <property type="entry name" value="GLUTAMINE-TRNA LIGASE"/>
    <property type="match status" value="1"/>
</dbReference>
<dbReference type="Pfam" id="PF00749">
    <property type="entry name" value="tRNA-synt_1c"/>
    <property type="match status" value="1"/>
</dbReference>
<dbReference type="Pfam" id="PF03950">
    <property type="entry name" value="tRNA-synt_1c_C"/>
    <property type="match status" value="1"/>
</dbReference>
<dbReference type="Pfam" id="PF20974">
    <property type="entry name" value="tRNA-synt_1c_C2"/>
    <property type="match status" value="1"/>
</dbReference>
<dbReference type="PRINTS" id="PR00987">
    <property type="entry name" value="TRNASYNTHGLU"/>
</dbReference>
<dbReference type="SUPFAM" id="SSF52374">
    <property type="entry name" value="Nucleotidylyl transferase"/>
    <property type="match status" value="1"/>
</dbReference>
<dbReference type="SUPFAM" id="SSF50715">
    <property type="entry name" value="Ribosomal protein L25-like"/>
    <property type="match status" value="1"/>
</dbReference>
<dbReference type="PROSITE" id="PS00178">
    <property type="entry name" value="AA_TRNA_LIGASE_I"/>
    <property type="match status" value="1"/>
</dbReference>
<proteinExistence type="inferred from homology"/>